<proteinExistence type="predicted"/>
<reference key="1">
    <citation type="journal article" date="2000" name="Virology">
        <title>A novel lipothrixvirus, SIFV, of the extremely thermophilic crenarchaeon Sulfolobus.</title>
        <authorList>
            <person name="Arnold H.P."/>
            <person name="Zillig W."/>
            <person name="Ziese U."/>
            <person name="Holz I."/>
            <person name="Crosby M."/>
            <person name="Utterback T."/>
            <person name="Weidmann J.F."/>
            <person name="Umayam L.A."/>
            <person name="Teffera K."/>
            <person name="Kristjanson J.K."/>
            <person name="Klenk H.P."/>
            <person name="Nelson K.E."/>
            <person name="Fraser C.M."/>
        </authorList>
    </citation>
    <scope>NUCLEOTIDE SEQUENCE [GENOMIC DNA]</scope>
</reference>
<dbReference type="EMBL" id="AF440571">
    <property type="protein sequence ID" value="AAL27723.1"/>
    <property type="molecule type" value="Genomic_DNA"/>
</dbReference>
<dbReference type="RefSeq" id="NP_445677.1">
    <property type="nucleotide sequence ID" value="NC_003214.2"/>
</dbReference>
<dbReference type="SMR" id="Q914L8"/>
<dbReference type="GeneID" id="922303"/>
<dbReference type="KEGG" id="vg:922303"/>
<dbReference type="Proteomes" id="UP000007017">
    <property type="component" value="Segment"/>
</dbReference>
<sequence>MPAFGECQKIINPQGLPLEALSQSERIFLEFCELYDSYPEEIKEAIKQW</sequence>
<gene>
    <name type="primary">SIFV0012</name>
</gene>
<organism>
    <name type="scientific">Sulfolobus islandicus filamentous virus (isolate Iceland/Hveragerdi)</name>
    <name type="common">SIFV</name>
    <dbReference type="NCBI Taxonomy" id="654908"/>
    <lineage>
        <taxon>Viruses</taxon>
        <taxon>Adnaviria</taxon>
        <taxon>Zilligvirae</taxon>
        <taxon>Taleaviricota</taxon>
        <taxon>Tokiviricetes</taxon>
        <taxon>Ligamenvirales</taxon>
        <taxon>Lipothrixviridae</taxon>
        <taxon>Betalipothrixvirus</taxon>
        <taxon>Sulfolobus islandicus filamentous virus</taxon>
    </lineage>
</organism>
<protein>
    <recommendedName>
        <fullName>Uncharacterized protein 12</fullName>
    </recommendedName>
</protein>
<name>Y012_SIFVH</name>
<keyword id="KW-1185">Reference proteome</keyword>
<feature type="chain" id="PRO_0000385386" description="Uncharacterized protein 12">
    <location>
        <begin position="1"/>
        <end position="49"/>
    </location>
</feature>
<accession>Q914L8</accession>
<organismHost>
    <name type="scientific">Saccharolobus islandicus</name>
    <name type="common">Sulfolobus islandicus</name>
    <dbReference type="NCBI Taxonomy" id="43080"/>
</organismHost>